<organism>
    <name type="scientific">Methanothermobacter marburgensis (strain ATCC BAA-927 / DSM 2133 / JCM 14651 / NBRC 100331 / OCM 82 / Marburg)</name>
    <name type="common">Methanobacterium thermoautotrophicum</name>
    <dbReference type="NCBI Taxonomy" id="79929"/>
    <lineage>
        <taxon>Archaea</taxon>
        <taxon>Methanobacteriati</taxon>
        <taxon>Methanobacteriota</taxon>
        <taxon>Methanomada group</taxon>
        <taxon>Methanobacteria</taxon>
        <taxon>Methanobacteriales</taxon>
        <taxon>Methanobacteriaceae</taxon>
        <taxon>Methanothermobacter</taxon>
    </lineage>
</organism>
<evidence type="ECO:0000269" key="1">
    <source>
    </source>
</evidence>
<proteinExistence type="evidence at protein level"/>
<reference key="1">
    <citation type="journal article" date="2010" name="J. Bacteriol.">
        <title>Complete genome sequence of Methanothermobacter marburgensis, a methanoarchaeon model organism.</title>
        <authorList>
            <person name="Liesegang H."/>
            <person name="Kaster A.K."/>
            <person name="Wiezer A."/>
            <person name="Goenrich M."/>
            <person name="Wollherr A."/>
            <person name="Seedorf H."/>
            <person name="Gottschalk G."/>
            <person name="Thauer R.K."/>
        </authorList>
    </citation>
    <scope>NUCLEOTIDE SEQUENCE [LARGE SCALE GENOMIC DNA]</scope>
    <source>
        <strain>ATCC BAA-927 / DSM 2133 / JCM 14651 / NBRC 100331 / OCM 82 / Marburg</strain>
    </source>
</reference>
<reference key="2">
    <citation type="journal article" date="1997" name="Eur. J. Biochem.">
        <title>Structures and functions of four anabolic 2-oxoacid oxidoreductases in Methanobacterium thermoautotrophicum.</title>
        <authorList>
            <person name="Tersteegen A."/>
            <person name="Linder D."/>
            <person name="Thauer R.K."/>
            <person name="Hedderich R."/>
        </authorList>
    </citation>
    <scope>PROTEIN SEQUENCE OF 2-21</scope>
    <scope>BIOPHYSICOCHEMICAL PROPERTIES</scope>
    <scope>SUBUNIT</scope>
    <source>
        <strain>ATCC BAA-927 / DSM 2133 / JCM 14651 / NBRC 100331 / OCM 82 / Marburg</strain>
    </source>
</reference>
<keyword id="KW-0903">Direct protein sequencing</keyword>
<keyword id="KW-0560">Oxidoreductase</keyword>
<comment type="catalytic activity">
    <reaction>
        <text>2 oxidized [2Fe-2S]-[ferredoxin] + 2-oxoglutarate + CoA = succinyl-CoA + 2 reduced [2Fe-2S]-[ferredoxin] + CO2 + H(+)</text>
        <dbReference type="Rhea" id="RHEA:17297"/>
        <dbReference type="Rhea" id="RHEA-COMP:10000"/>
        <dbReference type="Rhea" id="RHEA-COMP:10001"/>
        <dbReference type="ChEBI" id="CHEBI:15378"/>
        <dbReference type="ChEBI" id="CHEBI:16526"/>
        <dbReference type="ChEBI" id="CHEBI:16810"/>
        <dbReference type="ChEBI" id="CHEBI:33737"/>
        <dbReference type="ChEBI" id="CHEBI:33738"/>
        <dbReference type="ChEBI" id="CHEBI:57287"/>
        <dbReference type="ChEBI" id="CHEBI:57292"/>
        <dbReference type="EC" id="1.2.7.3"/>
    </reaction>
</comment>
<comment type="biophysicochemical properties">
    <phDependence>
        <text evidence="1">Optimum pH is 9.0.</text>
    </phDependence>
    <temperatureDependence>
        <text evidence="1">Optimum temperature is 70 degrees Celsius.</text>
    </temperatureDependence>
</comment>
<comment type="subunit">
    <text evidence="1">Heterotetramer of the KorA, KorB, KorC and KorD subunits.</text>
</comment>
<protein>
    <recommendedName>
        <fullName>2-oxoglutarate synthase subunit KorA</fullName>
        <ecNumber>1.2.7.3</ecNumber>
    </recommendedName>
    <alternativeName>
        <fullName>2-ketoglutarate oxidoreductase alpha chain</fullName>
        <shortName>KOR</shortName>
    </alternativeName>
    <alternativeName>
        <fullName>2-oxoglutarate-ferredoxin oxidoreductase subunit alpha</fullName>
    </alternativeName>
</protein>
<dbReference type="EC" id="1.2.7.3"/>
<dbReference type="EMBL" id="CP001710">
    <property type="protein sequence ID" value="ADL59002.1"/>
    <property type="molecule type" value="Genomic_DNA"/>
</dbReference>
<dbReference type="RefSeq" id="WP_013296214.1">
    <property type="nucleotide sequence ID" value="NC_014408.1"/>
</dbReference>
<dbReference type="SMR" id="P80904"/>
<dbReference type="STRING" id="79929.MTBMA_c14150"/>
<dbReference type="PaxDb" id="79929-MTBMA_c14150"/>
<dbReference type="GeneID" id="43707860"/>
<dbReference type="GeneID" id="9705124"/>
<dbReference type="KEGG" id="mmg:MTBMA_c14150"/>
<dbReference type="PATRIC" id="fig|79929.8.peg.1379"/>
<dbReference type="HOGENOM" id="CLU_017038_0_1_2"/>
<dbReference type="OrthoDB" id="31112at2157"/>
<dbReference type="Proteomes" id="UP000000345">
    <property type="component" value="Chromosome"/>
</dbReference>
<dbReference type="GO" id="GO:0047553">
    <property type="term" value="F:2-oxoglutarate synthase activity"/>
    <property type="evidence" value="ECO:0007669"/>
    <property type="project" value="UniProtKB-EC"/>
</dbReference>
<dbReference type="GO" id="GO:0006082">
    <property type="term" value="P:organic acid metabolic process"/>
    <property type="evidence" value="ECO:0007669"/>
    <property type="project" value="UniProtKB-ARBA"/>
</dbReference>
<dbReference type="GO" id="GO:0044272">
    <property type="term" value="P:sulfur compound biosynthetic process"/>
    <property type="evidence" value="ECO:0007669"/>
    <property type="project" value="UniProtKB-ARBA"/>
</dbReference>
<dbReference type="CDD" id="cd07034">
    <property type="entry name" value="TPP_PYR_PFOR_IOR-alpha_like"/>
    <property type="match status" value="1"/>
</dbReference>
<dbReference type="FunFam" id="3.40.50.970:FF:000022">
    <property type="entry name" value="2-oxoglutarate ferredoxin oxidoreductase alpha subunit"/>
    <property type="match status" value="1"/>
</dbReference>
<dbReference type="Gene3D" id="3.40.50.920">
    <property type="match status" value="1"/>
</dbReference>
<dbReference type="Gene3D" id="3.40.50.970">
    <property type="match status" value="1"/>
</dbReference>
<dbReference type="InterPro" id="IPR052368">
    <property type="entry name" value="2-oxoacid_oxidoreductase"/>
</dbReference>
<dbReference type="InterPro" id="IPR033412">
    <property type="entry name" value="PFOR_II"/>
</dbReference>
<dbReference type="InterPro" id="IPR002880">
    <property type="entry name" value="Pyrv_Fd/Flavodoxin_OxRdtase_N"/>
</dbReference>
<dbReference type="InterPro" id="IPR029061">
    <property type="entry name" value="THDP-binding"/>
</dbReference>
<dbReference type="InterPro" id="IPR009014">
    <property type="entry name" value="Transketo_C/PFOR_II"/>
</dbReference>
<dbReference type="NCBIfam" id="NF006412">
    <property type="entry name" value="PRK08659.1"/>
    <property type="match status" value="1"/>
</dbReference>
<dbReference type="PANTHER" id="PTHR43088:SF1">
    <property type="entry name" value="SUBUNIT OF PYRUVATE:FLAVODOXIN OXIDOREDUCTASE"/>
    <property type="match status" value="1"/>
</dbReference>
<dbReference type="PANTHER" id="PTHR43088">
    <property type="entry name" value="SUBUNIT OF PYRUVATE:FLAVODOXIN OXIDOREDUCTASE-RELATED"/>
    <property type="match status" value="1"/>
</dbReference>
<dbReference type="Pfam" id="PF17147">
    <property type="entry name" value="PFOR_II"/>
    <property type="match status" value="1"/>
</dbReference>
<dbReference type="Pfam" id="PF01855">
    <property type="entry name" value="POR_N"/>
    <property type="match status" value="1"/>
</dbReference>
<dbReference type="SUPFAM" id="SSF52518">
    <property type="entry name" value="Thiamin diphosphate-binding fold (THDP-binding)"/>
    <property type="match status" value="1"/>
</dbReference>
<dbReference type="SUPFAM" id="SSF52922">
    <property type="entry name" value="TK C-terminal domain-like"/>
    <property type="match status" value="1"/>
</dbReference>
<name>KORA_METTM</name>
<feature type="initiator methionine" description="Removed" evidence="1">
    <location>
        <position position="1"/>
    </location>
</feature>
<feature type="chain" id="PRO_0000099940" description="2-oxoglutarate synthase subunit KorA">
    <location>
        <begin position="2"/>
        <end position="375"/>
    </location>
</feature>
<accession>P80904</accession>
<accession>D9PXQ4</accession>
<gene>
    <name type="primary">korA</name>
    <name type="ordered locus">MTBMA_c14150</name>
</gene>
<sequence>MTEEYFIQGNDACARGAISAGCRFFAGYPITPSTEIAEEMAVLLPGEGGVFVQMEDEIGALGAVIGAVWGGVKGMTATSGPGFSLMQEHVGYAAMTETPLVIVDVQRGSPSTGQPTMASQSDMMQARWGSHGDYEIIALSPSSVQECFDFTVRAFNLAEEYRVPVVVLSDEIVGHMREKITIPDKVEIRKRKSPTSPPGEFIPFKPQGDFVPEMPAFGDGYRVPVTGLTHDERGYPDASNPEGHEKLVKRLCDKILNHRDKIVDVQKGWTDDADITVISYGAPSRSVATAVKMARSEGVRAGYIKINTPWPFPETEIREAAESSRKLLVVEMNLGQMFYEVQRVASGMAEVELLPKIGGEIHRPDEILNKIMGMK</sequence>